<feature type="chain" id="PRO_1000045106" description="Leucyl/phenylalanyl-tRNA--protein transferase">
    <location>
        <begin position="1"/>
        <end position="233"/>
    </location>
</feature>
<protein>
    <recommendedName>
        <fullName evidence="1">Leucyl/phenylalanyl-tRNA--protein transferase</fullName>
        <ecNumber evidence="1">2.3.2.6</ecNumber>
    </recommendedName>
    <alternativeName>
        <fullName evidence="1">L/F-transferase</fullName>
    </alternativeName>
    <alternativeName>
        <fullName evidence="1">Leucyltransferase</fullName>
    </alternativeName>
    <alternativeName>
        <fullName evidence="1">Phenyalanyltransferase</fullName>
    </alternativeName>
</protein>
<comment type="function">
    <text evidence="1">Functions in the N-end rule pathway of protein degradation where it conjugates Leu, Phe and, less efficiently, Met from aminoacyl-tRNAs to the N-termini of proteins containing an N-terminal arginine or lysine.</text>
</comment>
<comment type="catalytic activity">
    <reaction evidence="1">
        <text>N-terminal L-lysyl-[protein] + L-leucyl-tRNA(Leu) = N-terminal L-leucyl-L-lysyl-[protein] + tRNA(Leu) + H(+)</text>
        <dbReference type="Rhea" id="RHEA:12340"/>
        <dbReference type="Rhea" id="RHEA-COMP:9613"/>
        <dbReference type="Rhea" id="RHEA-COMP:9622"/>
        <dbReference type="Rhea" id="RHEA-COMP:12670"/>
        <dbReference type="Rhea" id="RHEA-COMP:12671"/>
        <dbReference type="ChEBI" id="CHEBI:15378"/>
        <dbReference type="ChEBI" id="CHEBI:65249"/>
        <dbReference type="ChEBI" id="CHEBI:78442"/>
        <dbReference type="ChEBI" id="CHEBI:78494"/>
        <dbReference type="ChEBI" id="CHEBI:133043"/>
        <dbReference type="EC" id="2.3.2.6"/>
    </reaction>
</comment>
<comment type="catalytic activity">
    <reaction evidence="1">
        <text>N-terminal L-arginyl-[protein] + L-leucyl-tRNA(Leu) = N-terminal L-leucyl-L-arginyl-[protein] + tRNA(Leu) + H(+)</text>
        <dbReference type="Rhea" id="RHEA:50416"/>
        <dbReference type="Rhea" id="RHEA-COMP:9613"/>
        <dbReference type="Rhea" id="RHEA-COMP:9622"/>
        <dbReference type="Rhea" id="RHEA-COMP:12672"/>
        <dbReference type="Rhea" id="RHEA-COMP:12673"/>
        <dbReference type="ChEBI" id="CHEBI:15378"/>
        <dbReference type="ChEBI" id="CHEBI:64719"/>
        <dbReference type="ChEBI" id="CHEBI:78442"/>
        <dbReference type="ChEBI" id="CHEBI:78494"/>
        <dbReference type="ChEBI" id="CHEBI:133044"/>
        <dbReference type="EC" id="2.3.2.6"/>
    </reaction>
</comment>
<comment type="catalytic activity">
    <reaction evidence="1">
        <text>L-phenylalanyl-tRNA(Phe) + an N-terminal L-alpha-aminoacyl-[protein] = an N-terminal L-phenylalanyl-L-alpha-aminoacyl-[protein] + tRNA(Phe)</text>
        <dbReference type="Rhea" id="RHEA:43632"/>
        <dbReference type="Rhea" id="RHEA-COMP:9668"/>
        <dbReference type="Rhea" id="RHEA-COMP:9699"/>
        <dbReference type="Rhea" id="RHEA-COMP:10636"/>
        <dbReference type="Rhea" id="RHEA-COMP:10637"/>
        <dbReference type="ChEBI" id="CHEBI:78442"/>
        <dbReference type="ChEBI" id="CHEBI:78531"/>
        <dbReference type="ChEBI" id="CHEBI:78597"/>
        <dbReference type="ChEBI" id="CHEBI:83561"/>
        <dbReference type="EC" id="2.3.2.6"/>
    </reaction>
</comment>
<comment type="subcellular location">
    <subcellularLocation>
        <location evidence="1">Cytoplasm</location>
    </subcellularLocation>
</comment>
<comment type="similarity">
    <text evidence="1">Belongs to the L/F-transferase family.</text>
</comment>
<proteinExistence type="inferred from homology"/>
<sequence length="233" mass="26217">MRLVQLSRHSIAFPSPEGALREPNGLLALGGDLSPARLLMAYQRGIFPWFSPGDPILWWSPDPRAVLWPEQFHLSRSMKRFHQRSPYRVTLNHAFGEVIEGCASDRDEGTWITSSIVRAYHQLHELGHAHSIEVWQENTLVGGMYGVAQGALFCGESMFSRAENASKTALLVFCQDFAHSGGKLIDCQVLNNHTASLGAVDIPRRDYLDYLSVLRGYRLPERFWVPRVLFPGG</sequence>
<accession>A6T6Y2</accession>
<evidence type="ECO:0000255" key="1">
    <source>
        <dbReference type="HAMAP-Rule" id="MF_00688"/>
    </source>
</evidence>
<dbReference type="EC" id="2.3.2.6" evidence="1"/>
<dbReference type="EMBL" id="CP000647">
    <property type="protein sequence ID" value="ABR76353.1"/>
    <property type="molecule type" value="Genomic_DNA"/>
</dbReference>
<dbReference type="RefSeq" id="WP_002898014.1">
    <property type="nucleotide sequence ID" value="NC_009648.1"/>
</dbReference>
<dbReference type="SMR" id="A6T6Y2"/>
<dbReference type="STRING" id="272620.KPN_00917"/>
<dbReference type="PaxDb" id="272620-KPN_00917"/>
<dbReference type="EnsemblBacteria" id="ABR76353">
    <property type="protein sequence ID" value="ABR76353"/>
    <property type="gene ID" value="KPN_00917"/>
</dbReference>
<dbReference type="KEGG" id="kpn:KPN_00917"/>
<dbReference type="HOGENOM" id="CLU_075045_0_0_6"/>
<dbReference type="Proteomes" id="UP000000265">
    <property type="component" value="Chromosome"/>
</dbReference>
<dbReference type="GO" id="GO:0005737">
    <property type="term" value="C:cytoplasm"/>
    <property type="evidence" value="ECO:0007669"/>
    <property type="project" value="UniProtKB-SubCell"/>
</dbReference>
<dbReference type="GO" id="GO:0008914">
    <property type="term" value="F:leucyl-tRNA--protein transferase activity"/>
    <property type="evidence" value="ECO:0007669"/>
    <property type="project" value="UniProtKB-UniRule"/>
</dbReference>
<dbReference type="GO" id="GO:0030163">
    <property type="term" value="P:protein catabolic process"/>
    <property type="evidence" value="ECO:0007669"/>
    <property type="project" value="UniProtKB-UniRule"/>
</dbReference>
<dbReference type="FunFam" id="3.30.70.3550:FF:000001">
    <property type="entry name" value="Leucyl/phenylalanyl-tRNA--protein transferase"/>
    <property type="match status" value="1"/>
</dbReference>
<dbReference type="FunFam" id="3.40.630.70:FF:000001">
    <property type="entry name" value="Leucyl/phenylalanyl-tRNA--protein transferase"/>
    <property type="match status" value="1"/>
</dbReference>
<dbReference type="Gene3D" id="3.40.630.70">
    <property type="entry name" value="Leucyl/phenylalanyl-tRNA-protein transferase, C-terminal domain"/>
    <property type="match status" value="1"/>
</dbReference>
<dbReference type="Gene3D" id="3.30.70.3550">
    <property type="entry name" value="Leucyl/phenylalanyl-tRNA-protein transferase, N-terminal domain"/>
    <property type="match status" value="1"/>
</dbReference>
<dbReference type="HAMAP" id="MF_00688">
    <property type="entry name" value="Leu_Phe_trans"/>
    <property type="match status" value="1"/>
</dbReference>
<dbReference type="InterPro" id="IPR016181">
    <property type="entry name" value="Acyl_CoA_acyltransferase"/>
</dbReference>
<dbReference type="InterPro" id="IPR004616">
    <property type="entry name" value="Leu/Phe-tRNA_Trfase"/>
</dbReference>
<dbReference type="InterPro" id="IPR042203">
    <property type="entry name" value="Leu/Phe-tRNA_Trfase_C"/>
</dbReference>
<dbReference type="InterPro" id="IPR042221">
    <property type="entry name" value="Leu/Phe-tRNA_Trfase_N"/>
</dbReference>
<dbReference type="NCBIfam" id="TIGR00667">
    <property type="entry name" value="aat"/>
    <property type="match status" value="1"/>
</dbReference>
<dbReference type="PANTHER" id="PTHR30098">
    <property type="entry name" value="LEUCYL/PHENYLALANYL-TRNA--PROTEIN TRANSFERASE"/>
    <property type="match status" value="1"/>
</dbReference>
<dbReference type="PANTHER" id="PTHR30098:SF2">
    <property type="entry name" value="LEUCYL_PHENYLALANYL-TRNA--PROTEIN TRANSFERASE"/>
    <property type="match status" value="1"/>
</dbReference>
<dbReference type="Pfam" id="PF03588">
    <property type="entry name" value="Leu_Phe_trans"/>
    <property type="match status" value="1"/>
</dbReference>
<dbReference type="SUPFAM" id="SSF55729">
    <property type="entry name" value="Acyl-CoA N-acyltransferases (Nat)"/>
    <property type="match status" value="1"/>
</dbReference>
<keyword id="KW-0012">Acyltransferase</keyword>
<keyword id="KW-0963">Cytoplasm</keyword>
<keyword id="KW-0808">Transferase</keyword>
<name>LFTR_KLEP7</name>
<organism>
    <name type="scientific">Klebsiella pneumoniae subsp. pneumoniae (strain ATCC 700721 / MGH 78578)</name>
    <dbReference type="NCBI Taxonomy" id="272620"/>
    <lineage>
        <taxon>Bacteria</taxon>
        <taxon>Pseudomonadati</taxon>
        <taxon>Pseudomonadota</taxon>
        <taxon>Gammaproteobacteria</taxon>
        <taxon>Enterobacterales</taxon>
        <taxon>Enterobacteriaceae</taxon>
        <taxon>Klebsiella/Raoultella group</taxon>
        <taxon>Klebsiella</taxon>
        <taxon>Klebsiella pneumoniae complex</taxon>
    </lineage>
</organism>
<reference key="1">
    <citation type="submission" date="2006-09" db="EMBL/GenBank/DDBJ databases">
        <authorList>
            <consortium name="The Klebsiella pneumonia Genome Sequencing Project"/>
            <person name="McClelland M."/>
            <person name="Sanderson E.K."/>
            <person name="Spieth J."/>
            <person name="Clifton W.S."/>
            <person name="Latreille P."/>
            <person name="Sabo A."/>
            <person name="Pepin K."/>
            <person name="Bhonagiri V."/>
            <person name="Porwollik S."/>
            <person name="Ali J."/>
            <person name="Wilson R.K."/>
        </authorList>
    </citation>
    <scope>NUCLEOTIDE SEQUENCE [LARGE SCALE GENOMIC DNA]</scope>
    <source>
        <strain>ATCC 700721 / MGH 78578</strain>
    </source>
</reference>
<gene>
    <name evidence="1" type="primary">aat</name>
    <name type="ordered locus">KPN78578_08920</name>
    <name type="ORF">KPN_00917</name>
</gene>